<name>COPT2_MOUSE</name>
<dbReference type="EMBL" id="AK008473">
    <property type="protein sequence ID" value="BAB25688.1"/>
    <property type="molecule type" value="mRNA"/>
</dbReference>
<dbReference type="EMBL" id="AK003269">
    <property type="protein sequence ID" value="BAB22682.1"/>
    <property type="molecule type" value="mRNA"/>
</dbReference>
<dbReference type="EMBL" id="AK007579">
    <property type="protein sequence ID" value="BAB25117.1"/>
    <property type="molecule type" value="mRNA"/>
</dbReference>
<dbReference type="EMBL" id="AL683829">
    <property type="status" value="NOT_ANNOTATED_CDS"/>
    <property type="molecule type" value="Genomic_DNA"/>
</dbReference>
<dbReference type="EMBL" id="BC029183">
    <property type="protein sequence ID" value="AAH29183.1"/>
    <property type="molecule type" value="mRNA"/>
</dbReference>
<dbReference type="CCDS" id="CCDS18236.1"/>
<dbReference type="RefSeq" id="NP_001277447.1">
    <property type="nucleotide sequence ID" value="NM_001290518.1"/>
</dbReference>
<dbReference type="RefSeq" id="NP_079562.1">
    <property type="nucleotide sequence ID" value="NM_025286.3"/>
</dbReference>
<dbReference type="SMR" id="Q9CPU9"/>
<dbReference type="BioGRID" id="203309">
    <property type="interactions" value="2"/>
</dbReference>
<dbReference type="FunCoup" id="Q9CPU9">
    <property type="interactions" value="329"/>
</dbReference>
<dbReference type="STRING" id="10090.ENSMUSP00000081578"/>
<dbReference type="iPTMnet" id="Q9CPU9"/>
<dbReference type="PhosphoSitePlus" id="Q9CPU9"/>
<dbReference type="jPOST" id="Q9CPU9"/>
<dbReference type="PaxDb" id="10090-ENSMUSP00000081578"/>
<dbReference type="ProteomicsDB" id="283791"/>
<dbReference type="Pumba" id="Q9CPU9"/>
<dbReference type="Antibodypedia" id="3100">
    <property type="antibodies" value="106 antibodies from 15 providers"/>
</dbReference>
<dbReference type="DNASU" id="20530"/>
<dbReference type="Ensembl" id="ENSMUST00000084530.9">
    <property type="protein sequence ID" value="ENSMUSP00000081578.3"/>
    <property type="gene ID" value="ENSMUSG00000066152.12"/>
</dbReference>
<dbReference type="GeneID" id="20530"/>
<dbReference type="KEGG" id="mmu:20530"/>
<dbReference type="UCSC" id="uc008tee.2">
    <property type="organism name" value="mouse"/>
</dbReference>
<dbReference type="AGR" id="MGI:1333844"/>
<dbReference type="CTD" id="1318"/>
<dbReference type="MGI" id="MGI:1333844">
    <property type="gene designation" value="Slc31a2"/>
</dbReference>
<dbReference type="VEuPathDB" id="HostDB:ENSMUSG00000066152"/>
<dbReference type="eggNOG" id="KOG3386">
    <property type="taxonomic scope" value="Eukaryota"/>
</dbReference>
<dbReference type="GeneTree" id="ENSGT00940000159996"/>
<dbReference type="InParanoid" id="Q9CPU9"/>
<dbReference type="OMA" id="MMPMHFF"/>
<dbReference type="OrthoDB" id="73901at2759"/>
<dbReference type="PhylomeDB" id="Q9CPU9"/>
<dbReference type="TreeFam" id="TF315142"/>
<dbReference type="BioGRID-ORCS" id="20530">
    <property type="hits" value="1 hit in 77 CRISPR screens"/>
</dbReference>
<dbReference type="ChiTaRS" id="Slc31a2">
    <property type="organism name" value="mouse"/>
</dbReference>
<dbReference type="PRO" id="PR:Q9CPU9"/>
<dbReference type="Proteomes" id="UP000000589">
    <property type="component" value="Chromosome 4"/>
</dbReference>
<dbReference type="RNAct" id="Q9CPU9">
    <property type="molecule type" value="protein"/>
</dbReference>
<dbReference type="Bgee" id="ENSMUSG00000066152">
    <property type="expression patterns" value="Expressed in lacrimal gland and 217 other cell types or tissues"/>
</dbReference>
<dbReference type="ExpressionAtlas" id="Q9CPU9">
    <property type="expression patterns" value="baseline and differential"/>
</dbReference>
<dbReference type="GO" id="GO:0005770">
    <property type="term" value="C:late endosome"/>
    <property type="evidence" value="ECO:0000314"/>
    <property type="project" value="MGI"/>
</dbReference>
<dbReference type="GO" id="GO:0031902">
    <property type="term" value="C:late endosome membrane"/>
    <property type="evidence" value="ECO:0000250"/>
    <property type="project" value="UniProtKB"/>
</dbReference>
<dbReference type="GO" id="GO:0005765">
    <property type="term" value="C:lysosomal membrane"/>
    <property type="evidence" value="ECO:0000250"/>
    <property type="project" value="UniProtKB"/>
</dbReference>
<dbReference type="GO" id="GO:0016020">
    <property type="term" value="C:membrane"/>
    <property type="evidence" value="ECO:0000314"/>
    <property type="project" value="MGI"/>
</dbReference>
<dbReference type="GO" id="GO:0005886">
    <property type="term" value="C:plasma membrane"/>
    <property type="evidence" value="ECO:0000250"/>
    <property type="project" value="UniProtKB"/>
</dbReference>
<dbReference type="GO" id="GO:0055037">
    <property type="term" value="C:recycling endosome"/>
    <property type="evidence" value="ECO:0000314"/>
    <property type="project" value="MGI"/>
</dbReference>
<dbReference type="GO" id="GO:0055038">
    <property type="term" value="C:recycling endosome membrane"/>
    <property type="evidence" value="ECO:0007669"/>
    <property type="project" value="UniProtKB-SubCell"/>
</dbReference>
<dbReference type="GO" id="GO:0005375">
    <property type="term" value="F:copper ion transmembrane transporter activity"/>
    <property type="evidence" value="ECO:0000250"/>
    <property type="project" value="UniProtKB"/>
</dbReference>
<dbReference type="GO" id="GO:0015677">
    <property type="term" value="P:copper ion import"/>
    <property type="evidence" value="ECO:0000250"/>
    <property type="project" value="UniProtKB"/>
</dbReference>
<dbReference type="GO" id="GO:0006825">
    <property type="term" value="P:copper ion transport"/>
    <property type="evidence" value="ECO:0000250"/>
    <property type="project" value="UniProtKB"/>
</dbReference>
<dbReference type="GO" id="GO:0006878">
    <property type="term" value="P:intracellular copper ion homeostasis"/>
    <property type="evidence" value="ECO:0000315"/>
    <property type="project" value="MGI"/>
</dbReference>
<dbReference type="GO" id="GO:1902311">
    <property type="term" value="P:regulation of copper ion transmembrane transport"/>
    <property type="evidence" value="ECO:0000315"/>
    <property type="project" value="MGI"/>
</dbReference>
<dbReference type="InterPro" id="IPR007274">
    <property type="entry name" value="Cop_transporter"/>
</dbReference>
<dbReference type="PANTHER" id="PTHR12483:SF8">
    <property type="entry name" value="PROTEIN SLC31A2"/>
    <property type="match status" value="1"/>
</dbReference>
<dbReference type="PANTHER" id="PTHR12483">
    <property type="entry name" value="SOLUTE CARRIER FAMILY 31 COPPER TRANSPORTERS"/>
    <property type="match status" value="1"/>
</dbReference>
<dbReference type="Pfam" id="PF04145">
    <property type="entry name" value="Ctr"/>
    <property type="match status" value="1"/>
</dbReference>
<proteinExistence type="evidence at protein level"/>
<accession>Q9CPU9</accession>
<keyword id="KW-0186">Copper</keyword>
<keyword id="KW-0187">Copper transport</keyword>
<keyword id="KW-0968">Cytoplasmic vesicle</keyword>
<keyword id="KW-0967">Endosome</keyword>
<keyword id="KW-0406">Ion transport</keyword>
<keyword id="KW-0458">Lysosome</keyword>
<keyword id="KW-0472">Membrane</keyword>
<keyword id="KW-0597">Phosphoprotein</keyword>
<keyword id="KW-1185">Reference proteome</keyword>
<keyword id="KW-0812">Transmembrane</keyword>
<keyword id="KW-1133">Transmembrane helix</keyword>
<keyword id="KW-0813">Transport</keyword>
<keyword id="KW-0832">Ubl conjugation</keyword>
<evidence type="ECO:0000250" key="1">
    <source>
        <dbReference type="UniProtKB" id="O15432"/>
    </source>
</evidence>
<evidence type="ECO:0000255" key="2"/>
<evidence type="ECO:0000269" key="3">
    <source>
    </source>
</evidence>
<evidence type="ECO:0000305" key="4"/>
<evidence type="ECO:0000305" key="5">
    <source>
    </source>
</evidence>
<evidence type="ECO:0000312" key="6">
    <source>
        <dbReference type="MGI" id="MGI:1333844"/>
    </source>
</evidence>
<evidence type="ECO:0007744" key="7">
    <source>
    </source>
</evidence>
<organism>
    <name type="scientific">Mus musculus</name>
    <name type="common">Mouse</name>
    <dbReference type="NCBI Taxonomy" id="10090"/>
    <lineage>
        <taxon>Eukaryota</taxon>
        <taxon>Metazoa</taxon>
        <taxon>Chordata</taxon>
        <taxon>Craniata</taxon>
        <taxon>Vertebrata</taxon>
        <taxon>Euteleostomi</taxon>
        <taxon>Mammalia</taxon>
        <taxon>Eutheria</taxon>
        <taxon>Euarchontoglires</taxon>
        <taxon>Glires</taxon>
        <taxon>Rodentia</taxon>
        <taxon>Myomorpha</taxon>
        <taxon>Muroidea</taxon>
        <taxon>Muridae</taxon>
        <taxon>Murinae</taxon>
        <taxon>Mus</taxon>
        <taxon>Mus</taxon>
    </lineage>
</organism>
<gene>
    <name evidence="6" type="primary">Slc31a2</name>
</gene>
<reference key="1">
    <citation type="journal article" date="2005" name="Science">
        <title>The transcriptional landscape of the mammalian genome.</title>
        <authorList>
            <person name="Carninci P."/>
            <person name="Kasukawa T."/>
            <person name="Katayama S."/>
            <person name="Gough J."/>
            <person name="Frith M.C."/>
            <person name="Maeda N."/>
            <person name="Oyama R."/>
            <person name="Ravasi T."/>
            <person name="Lenhard B."/>
            <person name="Wells C."/>
            <person name="Kodzius R."/>
            <person name="Shimokawa K."/>
            <person name="Bajic V.B."/>
            <person name="Brenner S.E."/>
            <person name="Batalov S."/>
            <person name="Forrest A.R."/>
            <person name="Zavolan M."/>
            <person name="Davis M.J."/>
            <person name="Wilming L.G."/>
            <person name="Aidinis V."/>
            <person name="Allen J.E."/>
            <person name="Ambesi-Impiombato A."/>
            <person name="Apweiler R."/>
            <person name="Aturaliya R.N."/>
            <person name="Bailey T.L."/>
            <person name="Bansal M."/>
            <person name="Baxter L."/>
            <person name="Beisel K.W."/>
            <person name="Bersano T."/>
            <person name="Bono H."/>
            <person name="Chalk A.M."/>
            <person name="Chiu K.P."/>
            <person name="Choudhary V."/>
            <person name="Christoffels A."/>
            <person name="Clutterbuck D.R."/>
            <person name="Crowe M.L."/>
            <person name="Dalla E."/>
            <person name="Dalrymple B.P."/>
            <person name="de Bono B."/>
            <person name="Della Gatta G."/>
            <person name="di Bernardo D."/>
            <person name="Down T."/>
            <person name="Engstrom P."/>
            <person name="Fagiolini M."/>
            <person name="Faulkner G."/>
            <person name="Fletcher C.F."/>
            <person name="Fukushima T."/>
            <person name="Furuno M."/>
            <person name="Futaki S."/>
            <person name="Gariboldi M."/>
            <person name="Georgii-Hemming P."/>
            <person name="Gingeras T.R."/>
            <person name="Gojobori T."/>
            <person name="Green R.E."/>
            <person name="Gustincich S."/>
            <person name="Harbers M."/>
            <person name="Hayashi Y."/>
            <person name="Hensch T.K."/>
            <person name="Hirokawa N."/>
            <person name="Hill D."/>
            <person name="Huminiecki L."/>
            <person name="Iacono M."/>
            <person name="Ikeo K."/>
            <person name="Iwama A."/>
            <person name="Ishikawa T."/>
            <person name="Jakt M."/>
            <person name="Kanapin A."/>
            <person name="Katoh M."/>
            <person name="Kawasawa Y."/>
            <person name="Kelso J."/>
            <person name="Kitamura H."/>
            <person name="Kitano H."/>
            <person name="Kollias G."/>
            <person name="Krishnan S.P."/>
            <person name="Kruger A."/>
            <person name="Kummerfeld S.K."/>
            <person name="Kurochkin I.V."/>
            <person name="Lareau L.F."/>
            <person name="Lazarevic D."/>
            <person name="Lipovich L."/>
            <person name="Liu J."/>
            <person name="Liuni S."/>
            <person name="McWilliam S."/>
            <person name="Madan Babu M."/>
            <person name="Madera M."/>
            <person name="Marchionni L."/>
            <person name="Matsuda H."/>
            <person name="Matsuzawa S."/>
            <person name="Miki H."/>
            <person name="Mignone F."/>
            <person name="Miyake S."/>
            <person name="Morris K."/>
            <person name="Mottagui-Tabar S."/>
            <person name="Mulder N."/>
            <person name="Nakano N."/>
            <person name="Nakauchi H."/>
            <person name="Ng P."/>
            <person name="Nilsson R."/>
            <person name="Nishiguchi S."/>
            <person name="Nishikawa S."/>
            <person name="Nori F."/>
            <person name="Ohara O."/>
            <person name="Okazaki Y."/>
            <person name="Orlando V."/>
            <person name="Pang K.C."/>
            <person name="Pavan W.J."/>
            <person name="Pavesi G."/>
            <person name="Pesole G."/>
            <person name="Petrovsky N."/>
            <person name="Piazza S."/>
            <person name="Reed J."/>
            <person name="Reid J.F."/>
            <person name="Ring B.Z."/>
            <person name="Ringwald M."/>
            <person name="Rost B."/>
            <person name="Ruan Y."/>
            <person name="Salzberg S.L."/>
            <person name="Sandelin A."/>
            <person name="Schneider C."/>
            <person name="Schoenbach C."/>
            <person name="Sekiguchi K."/>
            <person name="Semple C.A."/>
            <person name="Seno S."/>
            <person name="Sessa L."/>
            <person name="Sheng Y."/>
            <person name="Shibata Y."/>
            <person name="Shimada H."/>
            <person name="Shimada K."/>
            <person name="Silva D."/>
            <person name="Sinclair B."/>
            <person name="Sperling S."/>
            <person name="Stupka E."/>
            <person name="Sugiura K."/>
            <person name="Sultana R."/>
            <person name="Takenaka Y."/>
            <person name="Taki K."/>
            <person name="Tammoja K."/>
            <person name="Tan S.L."/>
            <person name="Tang S."/>
            <person name="Taylor M.S."/>
            <person name="Tegner J."/>
            <person name="Teichmann S.A."/>
            <person name="Ueda H.R."/>
            <person name="van Nimwegen E."/>
            <person name="Verardo R."/>
            <person name="Wei C.L."/>
            <person name="Yagi K."/>
            <person name="Yamanishi H."/>
            <person name="Zabarovsky E."/>
            <person name="Zhu S."/>
            <person name="Zimmer A."/>
            <person name="Hide W."/>
            <person name="Bult C."/>
            <person name="Grimmond S.M."/>
            <person name="Teasdale R.D."/>
            <person name="Liu E.T."/>
            <person name="Brusic V."/>
            <person name="Quackenbush J."/>
            <person name="Wahlestedt C."/>
            <person name="Mattick J.S."/>
            <person name="Hume D.A."/>
            <person name="Kai C."/>
            <person name="Sasaki D."/>
            <person name="Tomaru Y."/>
            <person name="Fukuda S."/>
            <person name="Kanamori-Katayama M."/>
            <person name="Suzuki M."/>
            <person name="Aoki J."/>
            <person name="Arakawa T."/>
            <person name="Iida J."/>
            <person name="Imamura K."/>
            <person name="Itoh M."/>
            <person name="Kato T."/>
            <person name="Kawaji H."/>
            <person name="Kawagashira N."/>
            <person name="Kawashima T."/>
            <person name="Kojima M."/>
            <person name="Kondo S."/>
            <person name="Konno H."/>
            <person name="Nakano K."/>
            <person name="Ninomiya N."/>
            <person name="Nishio T."/>
            <person name="Okada M."/>
            <person name="Plessy C."/>
            <person name="Shibata K."/>
            <person name="Shiraki T."/>
            <person name="Suzuki S."/>
            <person name="Tagami M."/>
            <person name="Waki K."/>
            <person name="Watahiki A."/>
            <person name="Okamura-Oho Y."/>
            <person name="Suzuki H."/>
            <person name="Kawai J."/>
            <person name="Hayashizaki Y."/>
        </authorList>
    </citation>
    <scope>NUCLEOTIDE SEQUENCE [LARGE SCALE MRNA]</scope>
    <source>
        <strain>C57BL/6J</strain>
        <tissue>Pancreas</tissue>
        <tissue>Small intestine</tissue>
    </source>
</reference>
<reference key="2">
    <citation type="submission" date="2003-03" db="EMBL/GenBank/DDBJ databases">
        <authorList>
            <person name="Bates K."/>
        </authorList>
    </citation>
    <scope>NUCLEOTIDE SEQUENCE</scope>
</reference>
<reference key="3">
    <citation type="journal article" date="2004" name="Genome Res.">
        <title>The status, quality, and expansion of the NIH full-length cDNA project: the Mammalian Gene Collection (MGC).</title>
        <authorList>
            <consortium name="The MGC Project Team"/>
        </authorList>
    </citation>
    <scope>NUCLEOTIDE SEQUENCE [LARGE SCALE MRNA]</scope>
    <source>
        <tissue>Eye</tissue>
    </source>
</reference>
<reference key="4">
    <citation type="journal article" date="2009" name="Immunity">
        <title>The phagosomal proteome in interferon-gamma-activated macrophages.</title>
        <authorList>
            <person name="Trost M."/>
            <person name="English L."/>
            <person name="Lemieux S."/>
            <person name="Courcelles M."/>
            <person name="Desjardins M."/>
            <person name="Thibault P."/>
        </authorList>
    </citation>
    <scope>IDENTIFICATION BY MASS SPECTROMETRY [LARGE SCALE ANALYSIS]</scope>
</reference>
<reference key="5">
    <citation type="journal article" date="2010" name="Cell">
        <title>A tissue-specific atlas of mouse protein phosphorylation and expression.</title>
        <authorList>
            <person name="Huttlin E.L."/>
            <person name="Jedrychowski M.P."/>
            <person name="Elias J.E."/>
            <person name="Goswami T."/>
            <person name="Rad R."/>
            <person name="Beausoleil S.A."/>
            <person name="Villen J."/>
            <person name="Haas W."/>
            <person name="Sowa M.E."/>
            <person name="Gygi S.P."/>
        </authorList>
    </citation>
    <scope>PHOSPHORYLATION [LARGE SCALE ANALYSIS] AT THR-75 AND SER-77</scope>
    <scope>IDENTIFICATION BY MASS SPECTROMETRY [LARGE SCALE ANALYSIS]</scope>
    <source>
        <tissue>Kidney</tissue>
        <tissue>Pancreas</tissue>
        <tissue>Spleen</tissue>
    </source>
</reference>
<reference key="6">
    <citation type="journal article" date="2013" name="Proc. Natl. Acad. Sci. U.S.A.">
        <title>Ctr2 regulates biogenesis of a cleaved form of mammalian Ctr1 metal transporter lacking the copper- and cisplatin-binding ecto-domain.</title>
        <authorList>
            <person name="Oehrvik H."/>
            <person name="Nose Y."/>
            <person name="Wood L.K."/>
            <person name="Kim B.E."/>
            <person name="Gleber S.C."/>
            <person name="Ralle M."/>
            <person name="Thiele D.J."/>
        </authorList>
    </citation>
    <scope>FUNCTION</scope>
    <scope>INTERACTION WITH SLC31A1</scope>
    <scope>DISRUPTION PHENOTYPE</scope>
    <scope>TOPOLOGY</scope>
</reference>
<feature type="chain" id="PRO_0000195044" description="Protein SLC31A2">
    <location>
        <begin position="1"/>
        <end position="143"/>
    </location>
</feature>
<feature type="topological domain" description="Extracellular" evidence="4">
    <location>
        <begin position="1"/>
        <end position="22"/>
    </location>
</feature>
<feature type="transmembrane region" description="Helical" evidence="2">
    <location>
        <begin position="23"/>
        <end position="43"/>
    </location>
</feature>
<feature type="topological domain" description="Cytoplasmic" evidence="4">
    <location>
        <begin position="44"/>
        <end position="93"/>
    </location>
</feature>
<feature type="transmembrane region" description="Helical" evidence="2">
    <location>
        <begin position="94"/>
        <end position="114"/>
    </location>
</feature>
<feature type="topological domain" description="Extracellular" evidence="4">
    <location>
        <begin position="115"/>
        <end position="119"/>
    </location>
</feature>
<feature type="transmembrane region" description="Helical" evidence="2">
    <location>
        <begin position="120"/>
        <end position="140"/>
    </location>
</feature>
<feature type="topological domain" description="Cytoplasmic" evidence="5">
    <location>
        <begin position="141"/>
        <end position="143"/>
    </location>
</feature>
<feature type="modified residue" description="Phosphothreonine" evidence="7">
    <location>
        <position position="75"/>
    </location>
</feature>
<feature type="modified residue" description="Phosphoserine" evidence="7">
    <location>
        <position position="77"/>
    </location>
</feature>
<sequence length="143" mass="16069">MPMHFIFSDEAVLLFDFWRVHSPTGMALSVLVVLLLAVLYEGIKVGKAKLLHKTLESLPATNSQQFILGPDQDSTGSRSTSDNRTRLRWFLCYFGQSLVHVIQVVIGYFVMLAVMSYNTWIFLGVVLGSAVGYYLAYPLLNMT</sequence>
<protein>
    <recommendedName>
        <fullName evidence="4">Protein SLC31A2</fullName>
    </recommendedName>
    <alternativeName>
        <fullName evidence="1">Copper transporter 2</fullName>
        <shortName>CTR2</shortName>
    </alternativeName>
    <alternativeName>
        <fullName>Solute carrier family 31 member 2</fullName>
    </alternativeName>
</protein>
<comment type="function">
    <text evidence="1 3">Does not function as a copper(1+) importer in vivo (PubMed:24167251). However, in vitro functions as a low-affinity copper(1+) importer (By similarity). Regulator of SLC31A1 which facilitates the cleavage of the SLC31A1 ecto-domain or which stabilizes the truncated form of SLC31A1 (Truncated CTR1 form), thereby drives the SLC31A1 truncated form-dependent endosomal copper export and modulates the copper and cisplatin accumulation via SLC31A1 (PubMed:24167251).</text>
</comment>
<comment type="subunit">
    <text evidence="3">Oligomer. Interacts with SLC31A1; this interaction stabilizes SLC31A2 and protects it from ubiquitination and the subsequent degradation.</text>
</comment>
<comment type="subcellular location">
    <subcellularLocation>
        <location evidence="1">Membrane</location>
        <topology evidence="2">Multi-pass membrane protein</topology>
    </subcellularLocation>
    <subcellularLocation>
        <location evidence="1">Cytoplasmic vesicle membrane</location>
        <topology evidence="2">Multi-pass membrane protein</topology>
    </subcellularLocation>
    <subcellularLocation>
        <location evidence="5">Late endosome membrane</location>
        <topology evidence="2">Multi-pass membrane protein</topology>
    </subcellularLocation>
    <subcellularLocation>
        <location evidence="1">Lysosome membrane</location>
        <topology evidence="2">Multi-pass membrane protein</topology>
    </subcellularLocation>
    <subcellularLocation>
        <location evidence="5">Recycling endosome membrane</location>
        <topology evidence="2">Multi-pass membrane protein</topology>
    </subcellularLocation>
    <text evidence="1 3">Plasma membrane localization is partial (By similarity). Localizes in endosomes recycling from and to the plasma membrane, as well as in late endosomes trafficking to the trans-Golgi network (TGN) (PubMed:24167251).</text>
</comment>
<comment type="domain">
    <text evidence="1">The N-terminal domain may be involved in Cu(2+) acquisition from potential degradation products of proteins in the lysosome.</text>
</comment>
<comment type="PTM">
    <text evidence="1">Ubiquitinated; ubiquitination and the subsequent proteasomal degradation are prevent by SLC31A1 that stabilizes it.</text>
</comment>
<comment type="disruption phenotype">
    <text evidence="3">Homozygous knockout mice lacking Slc31a2 grow normally, with no obvious developmental defects.</text>
</comment>
<comment type="similarity">
    <text evidence="4">Belongs to the copper transporter (Ctr) (TC 1.A.56) family. SLC31A subfamily.</text>
</comment>